<gene>
    <name type="primary">ADM5</name>
</gene>
<organism>
    <name type="scientific">Sus scrofa</name>
    <name type="common">Pig</name>
    <dbReference type="NCBI Taxonomy" id="9823"/>
    <lineage>
        <taxon>Eukaryota</taxon>
        <taxon>Metazoa</taxon>
        <taxon>Chordata</taxon>
        <taxon>Craniata</taxon>
        <taxon>Vertebrata</taxon>
        <taxon>Euteleostomi</taxon>
        <taxon>Mammalia</taxon>
        <taxon>Eutheria</taxon>
        <taxon>Laurasiatheria</taxon>
        <taxon>Artiodactyla</taxon>
        <taxon>Suina</taxon>
        <taxon>Suidae</taxon>
        <taxon>Sus</taxon>
    </lineage>
</organism>
<name>ADM5_PIG</name>
<sequence>MTAHILLLWLFASSILGDPDSAGRLTRHQVSLKSGRLCSLGTCQTHRLPEIIYWLRSASTKELSGKAGRKPQDPYSYGRRRRRRRRRREARLLRRLQDPSLRRAQLAG</sequence>
<reference key="1">
    <citation type="journal article" date="2008" name="J. Endocrinol.">
        <title>Central and peripheral cardiovascular actions of adrenomedullin 5, a novel member of the calcitonin gene-related peptide family, in mammals.</title>
        <authorList>
            <person name="Takei Y."/>
            <person name="Hashimoto H."/>
            <person name="Inoue K."/>
            <person name="Osaki T."/>
            <person name="Yoshizawa-Kumagaye K."/>
            <person name="Tsunemi M."/>
            <person name="Watanabe T.X."/>
            <person name="Ogoshi M."/>
            <person name="Minamino N."/>
            <person name="Ueta Y."/>
        </authorList>
    </citation>
    <scope>NUCLEOTIDE SEQUENCE [MRNA]</scope>
    <scope>VARIANT PHE-57</scope>
    <scope>AMIDATION AT TYR-77</scope>
    <scope>DISULFIDE BOND</scope>
    <scope>SYNTHESIS OF 26-77</scope>
    <scope>TISSUE SPECIFICITY</scope>
    <scope>FUNCTION</scope>
    <source>
        <tissue>Spleen</tissue>
    </source>
</reference>
<comment type="function">
    <text evidence="4">Seems to have a peripheral vasodepressor effect and a central vasopressor effect.</text>
</comment>
<comment type="subcellular location">
    <subcellularLocation>
        <location>Secreted</location>
    </subcellularLocation>
</comment>
<comment type="tissue specificity">
    <text evidence="4">Expressed abundantly in the spleen and thymus. Also expressed in adrenal and pituitary. Not expressed in brain, heart, kidney, liver and stomach.</text>
</comment>
<comment type="similarity">
    <text evidence="5">Belongs to the adrenomedullin family.</text>
</comment>
<keyword id="KW-0027">Amidation</keyword>
<keyword id="KW-0165">Cleavage on pair of basic residues</keyword>
<keyword id="KW-1015">Disulfide bond</keyword>
<keyword id="KW-0372">Hormone</keyword>
<keyword id="KW-1185">Reference proteome</keyword>
<keyword id="KW-0964">Secreted</keyword>
<keyword id="KW-0732">Signal</keyword>
<feature type="signal peptide" evidence="2">
    <location>
        <begin position="1"/>
        <end position="18"/>
    </location>
</feature>
<feature type="propeptide" id="PRO_0000392552">
    <location>
        <begin position="19"/>
        <end position="25"/>
    </location>
</feature>
<feature type="peptide" id="PRO_0000392553" description="Adrenomedullin-5">
    <location>
        <begin position="26"/>
        <end position="77"/>
    </location>
</feature>
<feature type="propeptide" id="PRO_0000392554" evidence="1">
    <location>
        <begin position="89"/>
        <end position="108"/>
    </location>
</feature>
<feature type="region of interest" description="Disordered" evidence="3">
    <location>
        <begin position="61"/>
        <end position="108"/>
    </location>
</feature>
<feature type="compositionally biased region" description="Basic residues" evidence="3">
    <location>
        <begin position="78"/>
        <end position="89"/>
    </location>
</feature>
<feature type="compositionally biased region" description="Basic and acidic residues" evidence="3">
    <location>
        <begin position="90"/>
        <end position="101"/>
    </location>
</feature>
<feature type="modified residue" description="Tyrosine amide" evidence="4">
    <location>
        <position position="77"/>
    </location>
</feature>
<feature type="disulfide bond" evidence="4">
    <location>
        <begin position="38"/>
        <end position="43"/>
    </location>
</feature>
<feature type="sequence variant" evidence="4">
    <original>S</original>
    <variation>F</variation>
    <location>
        <position position="57"/>
    </location>
</feature>
<evidence type="ECO:0000250" key="1"/>
<evidence type="ECO:0000255" key="2"/>
<evidence type="ECO:0000256" key="3">
    <source>
        <dbReference type="SAM" id="MobiDB-lite"/>
    </source>
</evidence>
<evidence type="ECO:0000269" key="4">
    <source>
    </source>
</evidence>
<evidence type="ECO:0000305" key="5"/>
<protein>
    <recommendedName>
        <fullName>ADM5</fullName>
    </recommendedName>
    <component>
        <recommendedName>
            <fullName>Adrenomedullin-5</fullName>
            <shortName>AM5</shortName>
        </recommendedName>
    </component>
</protein>
<proteinExistence type="evidence at protein level"/>
<accession>A5LHG2</accession>
<dbReference type="EMBL" id="AB287333">
    <property type="protein sequence ID" value="BAF64272.1"/>
    <property type="molecule type" value="mRNA"/>
</dbReference>
<dbReference type="RefSeq" id="NP_001093409.1">
    <property type="nucleotide sequence ID" value="NM_001099939.1"/>
</dbReference>
<dbReference type="PaxDb" id="9823-ENSSSCP00000003462"/>
<dbReference type="Ensembl" id="ENSSSCT00015098633.1">
    <property type="protein sequence ID" value="ENSSSCP00015040666.1"/>
    <property type="gene ID" value="ENSSSCG00015073286.1"/>
</dbReference>
<dbReference type="Ensembl" id="ENSSSCT00025106980.1">
    <property type="protein sequence ID" value="ENSSSCP00025048146.1"/>
    <property type="gene ID" value="ENSSSCG00025077072.1"/>
</dbReference>
<dbReference type="Ensembl" id="ENSSSCT00045028688.1">
    <property type="protein sequence ID" value="ENSSSCP00045019842.1"/>
    <property type="gene ID" value="ENSSSCG00045016785.1"/>
</dbReference>
<dbReference type="Ensembl" id="ENSSSCT00050069970.1">
    <property type="protein sequence ID" value="ENSSSCP00050030086.1"/>
    <property type="gene ID" value="ENSSSCG00050051378.1"/>
</dbReference>
<dbReference type="Ensembl" id="ENSSSCT00060108669.1">
    <property type="protein sequence ID" value="ENSSSCP00060048468.1"/>
    <property type="gene ID" value="ENSSSCG00060078620.1"/>
</dbReference>
<dbReference type="Ensembl" id="ENSSSCT00105071824">
    <property type="protein sequence ID" value="ENSSSCP00105050846"/>
    <property type="gene ID" value="ENSSSCG00105037663"/>
</dbReference>
<dbReference type="Ensembl" id="ENSSSCT00110058082">
    <property type="protein sequence ID" value="ENSSSCP00110040463"/>
    <property type="gene ID" value="ENSSSCG00110030406"/>
</dbReference>
<dbReference type="Ensembl" id="ENSSSCT00115035757">
    <property type="protein sequence ID" value="ENSSSCP00115033898"/>
    <property type="gene ID" value="ENSSSCG00115020181"/>
</dbReference>
<dbReference type="GeneID" id="100101476"/>
<dbReference type="KEGG" id="ssc:100101476"/>
<dbReference type="CTD" id="199800"/>
<dbReference type="eggNOG" id="ENOG502TD4C">
    <property type="taxonomic scope" value="Eukaryota"/>
</dbReference>
<dbReference type="HOGENOM" id="CLU_2209104_0_0_1"/>
<dbReference type="InParanoid" id="A5LHG2"/>
<dbReference type="OrthoDB" id="9743669at2759"/>
<dbReference type="Proteomes" id="UP000008227">
    <property type="component" value="Unplaced"/>
</dbReference>
<dbReference type="Proteomes" id="UP000314985">
    <property type="component" value="Unplaced"/>
</dbReference>
<dbReference type="Proteomes" id="UP000694570">
    <property type="component" value="Unplaced"/>
</dbReference>
<dbReference type="Proteomes" id="UP000694571">
    <property type="component" value="Unplaced"/>
</dbReference>
<dbReference type="Proteomes" id="UP000694720">
    <property type="component" value="Unplaced"/>
</dbReference>
<dbReference type="Proteomes" id="UP000694722">
    <property type="component" value="Unplaced"/>
</dbReference>
<dbReference type="Proteomes" id="UP000694723">
    <property type="component" value="Unplaced"/>
</dbReference>
<dbReference type="Proteomes" id="UP000694724">
    <property type="component" value="Unplaced"/>
</dbReference>
<dbReference type="Proteomes" id="UP000694725">
    <property type="component" value="Unplaced"/>
</dbReference>
<dbReference type="Proteomes" id="UP000694726">
    <property type="component" value="Unplaced"/>
</dbReference>
<dbReference type="Proteomes" id="UP000694727">
    <property type="component" value="Unplaced"/>
</dbReference>
<dbReference type="Proteomes" id="UP000694728">
    <property type="component" value="Unplaced"/>
</dbReference>
<dbReference type="GO" id="GO:0005576">
    <property type="term" value="C:extracellular region"/>
    <property type="evidence" value="ECO:0007669"/>
    <property type="project" value="UniProtKB-SubCell"/>
</dbReference>
<dbReference type="GO" id="GO:0005179">
    <property type="term" value="F:hormone activity"/>
    <property type="evidence" value="ECO:0007669"/>
    <property type="project" value="UniProtKB-KW"/>
</dbReference>
<dbReference type="GO" id="GO:0007189">
    <property type="term" value="P:adenylate cyclase-activating G protein-coupled receptor signaling pathway"/>
    <property type="evidence" value="ECO:0000314"/>
    <property type="project" value="UniProtKB"/>
</dbReference>
<dbReference type="GO" id="GO:0010460">
    <property type="term" value="P:positive regulation of heart rate"/>
    <property type="evidence" value="ECO:0000314"/>
    <property type="project" value="UniProtKB"/>
</dbReference>
<dbReference type="GO" id="GO:0003073">
    <property type="term" value="P:regulation of systemic arterial blood pressure"/>
    <property type="evidence" value="ECO:0000314"/>
    <property type="project" value="UniProtKB"/>
</dbReference>
<dbReference type="GO" id="GO:0035809">
    <property type="term" value="P:regulation of urine volume"/>
    <property type="evidence" value="ECO:0000314"/>
    <property type="project" value="UniProtKB"/>
</dbReference>
<dbReference type="InterPro" id="IPR051665">
    <property type="entry name" value="Adrenomedullin-reg_peptide"/>
</dbReference>
<dbReference type="PANTHER" id="PTHR23414">
    <property type="entry name" value="ADRENOMEDULLIN, ADM"/>
    <property type="match status" value="1"/>
</dbReference>
<dbReference type="PANTHER" id="PTHR23414:SF6">
    <property type="entry name" value="ADRENOMEDULLIN-5-LIKE PROTEIN-RELATED"/>
    <property type="match status" value="1"/>
</dbReference>